<proteinExistence type="inferred from homology"/>
<keyword id="KW-0030">Aminoacyl-tRNA synthetase</keyword>
<keyword id="KW-0067">ATP-binding</keyword>
<keyword id="KW-0963">Cytoplasm</keyword>
<keyword id="KW-0436">Ligase</keyword>
<keyword id="KW-0547">Nucleotide-binding</keyword>
<keyword id="KW-0648">Protein biosynthesis</keyword>
<sequence>MKVALPKGVFDIFPYITDAKHMWRHTSLWHRVEDVIHEVCDLYGFSEIRTPVFEKSEVFLHVGEQSDIVKKEMYTFLDKKGRSLTLRPEGTAPIVRSFIDNPMSQREDNKFYYILPMFRYERQQSGRYRQHHQFGVEAIGVRHPLRDAEVLSLLWNFYSAIGLQYMQIQLNFLGGSATRKRYDQVLRGYFLQHLDSLSSLSKERFNTNLLRILDSKEPEDQEIIKSAPPILEYVSDEDRKYFDEILSALSALNIPYSINSRLVRGLDYYTDVVFEAITTFGGHSYALGGGGRYDGLIAASGGVATPACGFGVGLERVIQTLLAQGNLTLPSSHKLRLIPVEPEADSFCFVWAQHLRSLGIPTEVDWTHKKLKAALKTADTEKVTFVCPIGERELLSEQLTIKNMSLRQEFSGSKQEVEQRLLYEIQNTSL</sequence>
<accession>Q824R3</accession>
<name>SYH_CHLCV</name>
<feature type="chain" id="PRO_0000136138" description="Histidine--tRNA ligase">
    <location>
        <begin position="1"/>
        <end position="430"/>
    </location>
</feature>
<organism>
    <name type="scientific">Chlamydia caviae (strain ATCC VR-813 / DSM 19441 / 03DC25 / GPIC)</name>
    <name type="common">Chlamydophila caviae</name>
    <dbReference type="NCBI Taxonomy" id="227941"/>
    <lineage>
        <taxon>Bacteria</taxon>
        <taxon>Pseudomonadati</taxon>
        <taxon>Chlamydiota</taxon>
        <taxon>Chlamydiia</taxon>
        <taxon>Chlamydiales</taxon>
        <taxon>Chlamydiaceae</taxon>
        <taxon>Chlamydia/Chlamydophila group</taxon>
        <taxon>Chlamydia</taxon>
    </lineage>
</organism>
<dbReference type="EC" id="6.1.1.21" evidence="1"/>
<dbReference type="EMBL" id="AE015925">
    <property type="protein sequence ID" value="AAP04828.1"/>
    <property type="molecule type" value="Genomic_DNA"/>
</dbReference>
<dbReference type="RefSeq" id="WP_011006049.1">
    <property type="nucleotide sequence ID" value="NC_003361.3"/>
</dbReference>
<dbReference type="SMR" id="Q824R3"/>
<dbReference type="STRING" id="227941.CCA_00076"/>
<dbReference type="KEGG" id="cca:CCA_00076"/>
<dbReference type="eggNOG" id="COG0124">
    <property type="taxonomic scope" value="Bacteria"/>
</dbReference>
<dbReference type="HOGENOM" id="CLU_025113_1_1_0"/>
<dbReference type="OrthoDB" id="9800814at2"/>
<dbReference type="Proteomes" id="UP000002193">
    <property type="component" value="Chromosome"/>
</dbReference>
<dbReference type="GO" id="GO:0005737">
    <property type="term" value="C:cytoplasm"/>
    <property type="evidence" value="ECO:0007669"/>
    <property type="project" value="UniProtKB-SubCell"/>
</dbReference>
<dbReference type="GO" id="GO:0005524">
    <property type="term" value="F:ATP binding"/>
    <property type="evidence" value="ECO:0007669"/>
    <property type="project" value="UniProtKB-UniRule"/>
</dbReference>
<dbReference type="GO" id="GO:0004821">
    <property type="term" value="F:histidine-tRNA ligase activity"/>
    <property type="evidence" value="ECO:0007669"/>
    <property type="project" value="UniProtKB-UniRule"/>
</dbReference>
<dbReference type="GO" id="GO:0006427">
    <property type="term" value="P:histidyl-tRNA aminoacylation"/>
    <property type="evidence" value="ECO:0007669"/>
    <property type="project" value="UniProtKB-UniRule"/>
</dbReference>
<dbReference type="CDD" id="cd00773">
    <property type="entry name" value="HisRS-like_core"/>
    <property type="match status" value="1"/>
</dbReference>
<dbReference type="FunFam" id="3.30.930.10:FF:000166">
    <property type="entry name" value="Histidine--tRNA ligase"/>
    <property type="match status" value="1"/>
</dbReference>
<dbReference type="Gene3D" id="3.40.50.800">
    <property type="entry name" value="Anticodon-binding domain"/>
    <property type="match status" value="1"/>
</dbReference>
<dbReference type="Gene3D" id="3.30.930.10">
    <property type="entry name" value="Bira Bifunctional Protein, Domain 2"/>
    <property type="match status" value="1"/>
</dbReference>
<dbReference type="HAMAP" id="MF_00127">
    <property type="entry name" value="His_tRNA_synth"/>
    <property type="match status" value="1"/>
</dbReference>
<dbReference type="InterPro" id="IPR006195">
    <property type="entry name" value="aa-tRNA-synth_II"/>
</dbReference>
<dbReference type="InterPro" id="IPR045864">
    <property type="entry name" value="aa-tRNA-synth_II/BPL/LPL"/>
</dbReference>
<dbReference type="InterPro" id="IPR004154">
    <property type="entry name" value="Anticodon-bd"/>
</dbReference>
<dbReference type="InterPro" id="IPR036621">
    <property type="entry name" value="Anticodon-bd_dom_sf"/>
</dbReference>
<dbReference type="InterPro" id="IPR015807">
    <property type="entry name" value="His-tRNA-ligase"/>
</dbReference>
<dbReference type="InterPro" id="IPR041715">
    <property type="entry name" value="HisRS-like_core"/>
</dbReference>
<dbReference type="InterPro" id="IPR004516">
    <property type="entry name" value="HisRS/HisZ"/>
</dbReference>
<dbReference type="NCBIfam" id="TIGR00442">
    <property type="entry name" value="hisS"/>
    <property type="match status" value="1"/>
</dbReference>
<dbReference type="PANTHER" id="PTHR43707:SF1">
    <property type="entry name" value="HISTIDINE--TRNA LIGASE, MITOCHONDRIAL-RELATED"/>
    <property type="match status" value="1"/>
</dbReference>
<dbReference type="PANTHER" id="PTHR43707">
    <property type="entry name" value="HISTIDYL-TRNA SYNTHETASE"/>
    <property type="match status" value="1"/>
</dbReference>
<dbReference type="Pfam" id="PF03129">
    <property type="entry name" value="HGTP_anticodon"/>
    <property type="match status" value="1"/>
</dbReference>
<dbReference type="Pfam" id="PF13393">
    <property type="entry name" value="tRNA-synt_His"/>
    <property type="match status" value="1"/>
</dbReference>
<dbReference type="PIRSF" id="PIRSF001549">
    <property type="entry name" value="His-tRNA_synth"/>
    <property type="match status" value="1"/>
</dbReference>
<dbReference type="SUPFAM" id="SSF52954">
    <property type="entry name" value="Class II aaRS ABD-related"/>
    <property type="match status" value="1"/>
</dbReference>
<dbReference type="SUPFAM" id="SSF55681">
    <property type="entry name" value="Class II aaRS and biotin synthetases"/>
    <property type="match status" value="1"/>
</dbReference>
<dbReference type="PROSITE" id="PS50862">
    <property type="entry name" value="AA_TRNA_LIGASE_II"/>
    <property type="match status" value="1"/>
</dbReference>
<reference key="1">
    <citation type="journal article" date="2003" name="Nucleic Acids Res.">
        <title>Genome sequence of Chlamydophila caviae (Chlamydia psittaci GPIC): examining the role of niche-specific genes in the evolution of the Chlamydiaceae.</title>
        <authorList>
            <person name="Read T.D."/>
            <person name="Myers G.S.A."/>
            <person name="Brunham R.C."/>
            <person name="Nelson W.C."/>
            <person name="Paulsen I.T."/>
            <person name="Heidelberg J.F."/>
            <person name="Holtzapple E.K."/>
            <person name="Khouri H.M."/>
            <person name="Federova N.B."/>
            <person name="Carty H.A."/>
            <person name="Umayam L.A."/>
            <person name="Haft D.H."/>
            <person name="Peterson J.D."/>
            <person name="Beanan M.J."/>
            <person name="White O."/>
            <person name="Salzberg S.L."/>
            <person name="Hsia R.-C."/>
            <person name="McClarty G."/>
            <person name="Rank R.G."/>
            <person name="Bavoil P.M."/>
            <person name="Fraser C.M."/>
        </authorList>
    </citation>
    <scope>NUCLEOTIDE SEQUENCE [LARGE SCALE GENOMIC DNA]</scope>
    <source>
        <strain>ATCC VR-813 / DSM 19441 / 03DC25 / GPIC</strain>
    </source>
</reference>
<protein>
    <recommendedName>
        <fullName evidence="1">Histidine--tRNA ligase</fullName>
        <ecNumber evidence="1">6.1.1.21</ecNumber>
    </recommendedName>
    <alternativeName>
        <fullName evidence="1">Histidyl-tRNA synthetase</fullName>
        <shortName evidence="1">HisRS</shortName>
    </alternativeName>
</protein>
<comment type="catalytic activity">
    <reaction evidence="1">
        <text>tRNA(His) + L-histidine + ATP = L-histidyl-tRNA(His) + AMP + diphosphate + H(+)</text>
        <dbReference type="Rhea" id="RHEA:17313"/>
        <dbReference type="Rhea" id="RHEA-COMP:9665"/>
        <dbReference type="Rhea" id="RHEA-COMP:9689"/>
        <dbReference type="ChEBI" id="CHEBI:15378"/>
        <dbReference type="ChEBI" id="CHEBI:30616"/>
        <dbReference type="ChEBI" id="CHEBI:33019"/>
        <dbReference type="ChEBI" id="CHEBI:57595"/>
        <dbReference type="ChEBI" id="CHEBI:78442"/>
        <dbReference type="ChEBI" id="CHEBI:78527"/>
        <dbReference type="ChEBI" id="CHEBI:456215"/>
        <dbReference type="EC" id="6.1.1.21"/>
    </reaction>
</comment>
<comment type="subunit">
    <text evidence="1">Homodimer.</text>
</comment>
<comment type="subcellular location">
    <subcellularLocation>
        <location evidence="1">Cytoplasm</location>
    </subcellularLocation>
</comment>
<comment type="similarity">
    <text evidence="1">Belongs to the class-II aminoacyl-tRNA synthetase family.</text>
</comment>
<evidence type="ECO:0000255" key="1">
    <source>
        <dbReference type="HAMAP-Rule" id="MF_00127"/>
    </source>
</evidence>
<gene>
    <name evidence="1" type="primary">hisS</name>
    <name type="ordered locus">CCA_00076</name>
</gene>